<keyword id="KW-0028">Amino-acid biosynthesis</keyword>
<keyword id="KW-0057">Aromatic amino acid biosynthesis</keyword>
<keyword id="KW-0413">Isomerase</keyword>
<keyword id="KW-1185">Reference proteome</keyword>
<keyword id="KW-0822">Tryptophan biosynthesis</keyword>
<sequence>MKSLHIKICGLTSLVDARAAVAAGADAIGLVFYAPSPRAVSVAQARAIALGIGPFTVATGLFVDADPGFVQSVLAEVPLQLLQFHGSESRAYCESFQRPYMKAIRMRPELDVVAAMAEYPSASAILLDAYRPGVPGGTGETFDWGRVPQHTSRPLVLAGGLAPENVANAISATRVYGVDVSGGVESAPGVKDHEKIHRFITCALQASAQLNSKGD</sequence>
<evidence type="ECO:0000255" key="1">
    <source>
        <dbReference type="HAMAP-Rule" id="MF_00135"/>
    </source>
</evidence>
<organism>
    <name type="scientific">Cellvibrio japonicus (strain Ueda107)</name>
    <name type="common">Pseudomonas fluorescens subsp. cellulosa</name>
    <dbReference type="NCBI Taxonomy" id="498211"/>
    <lineage>
        <taxon>Bacteria</taxon>
        <taxon>Pseudomonadati</taxon>
        <taxon>Pseudomonadota</taxon>
        <taxon>Gammaproteobacteria</taxon>
        <taxon>Cellvibrionales</taxon>
        <taxon>Cellvibrionaceae</taxon>
        <taxon>Cellvibrio</taxon>
    </lineage>
</organism>
<proteinExistence type="inferred from homology"/>
<reference key="1">
    <citation type="journal article" date="2008" name="J. Bacteriol.">
        <title>Insights into plant cell wall degradation from the genome sequence of the soil bacterium Cellvibrio japonicus.</title>
        <authorList>
            <person name="DeBoy R.T."/>
            <person name="Mongodin E.F."/>
            <person name="Fouts D.E."/>
            <person name="Tailford L.E."/>
            <person name="Khouri H."/>
            <person name="Emerson J.B."/>
            <person name="Mohamoud Y."/>
            <person name="Watkins K."/>
            <person name="Henrissat B."/>
            <person name="Gilbert H.J."/>
            <person name="Nelson K.E."/>
        </authorList>
    </citation>
    <scope>NUCLEOTIDE SEQUENCE [LARGE SCALE GENOMIC DNA]</scope>
    <source>
        <strain>Ueda107</strain>
    </source>
</reference>
<feature type="chain" id="PRO_1000095915" description="N-(5'-phosphoribosyl)anthranilate isomerase">
    <location>
        <begin position="1"/>
        <end position="215"/>
    </location>
</feature>
<comment type="catalytic activity">
    <reaction evidence="1">
        <text>N-(5-phospho-beta-D-ribosyl)anthranilate = 1-(2-carboxyphenylamino)-1-deoxy-D-ribulose 5-phosphate</text>
        <dbReference type="Rhea" id="RHEA:21540"/>
        <dbReference type="ChEBI" id="CHEBI:18277"/>
        <dbReference type="ChEBI" id="CHEBI:58613"/>
        <dbReference type="EC" id="5.3.1.24"/>
    </reaction>
</comment>
<comment type="pathway">
    <text evidence="1">Amino-acid biosynthesis; L-tryptophan biosynthesis; L-tryptophan from chorismate: step 3/5.</text>
</comment>
<comment type="similarity">
    <text evidence="1">Belongs to the TrpF family.</text>
</comment>
<accession>B3PFN8</accession>
<dbReference type="EC" id="5.3.1.24" evidence="1"/>
<dbReference type="EMBL" id="CP000934">
    <property type="protein sequence ID" value="ACE83328.1"/>
    <property type="molecule type" value="Genomic_DNA"/>
</dbReference>
<dbReference type="RefSeq" id="WP_012487371.1">
    <property type="nucleotide sequence ID" value="NC_010995.1"/>
</dbReference>
<dbReference type="SMR" id="B3PFN8"/>
<dbReference type="STRING" id="498211.CJA_1750"/>
<dbReference type="KEGG" id="cja:CJA_1750"/>
<dbReference type="eggNOG" id="COG0135">
    <property type="taxonomic scope" value="Bacteria"/>
</dbReference>
<dbReference type="HOGENOM" id="CLU_076364_2_0_6"/>
<dbReference type="OrthoDB" id="9796196at2"/>
<dbReference type="UniPathway" id="UPA00035">
    <property type="reaction ID" value="UER00042"/>
</dbReference>
<dbReference type="Proteomes" id="UP000001036">
    <property type="component" value="Chromosome"/>
</dbReference>
<dbReference type="GO" id="GO:0004640">
    <property type="term" value="F:phosphoribosylanthranilate isomerase activity"/>
    <property type="evidence" value="ECO:0007669"/>
    <property type="project" value="UniProtKB-UniRule"/>
</dbReference>
<dbReference type="GO" id="GO:0000162">
    <property type="term" value="P:L-tryptophan biosynthetic process"/>
    <property type="evidence" value="ECO:0007669"/>
    <property type="project" value="UniProtKB-UniRule"/>
</dbReference>
<dbReference type="CDD" id="cd00405">
    <property type="entry name" value="PRAI"/>
    <property type="match status" value="1"/>
</dbReference>
<dbReference type="FunFam" id="3.20.20.70:FF:000075">
    <property type="entry name" value="Tryptophan biosynthesis protein TRP1"/>
    <property type="match status" value="1"/>
</dbReference>
<dbReference type="Gene3D" id="3.20.20.70">
    <property type="entry name" value="Aldolase class I"/>
    <property type="match status" value="1"/>
</dbReference>
<dbReference type="HAMAP" id="MF_00135">
    <property type="entry name" value="PRAI"/>
    <property type="match status" value="1"/>
</dbReference>
<dbReference type="InterPro" id="IPR013785">
    <property type="entry name" value="Aldolase_TIM"/>
</dbReference>
<dbReference type="InterPro" id="IPR001240">
    <property type="entry name" value="PRAI_dom"/>
</dbReference>
<dbReference type="InterPro" id="IPR011060">
    <property type="entry name" value="RibuloseP-bd_barrel"/>
</dbReference>
<dbReference type="InterPro" id="IPR044643">
    <property type="entry name" value="TrpF_fam"/>
</dbReference>
<dbReference type="NCBIfam" id="NF002298">
    <property type="entry name" value="PRK01222.1-4"/>
    <property type="match status" value="1"/>
</dbReference>
<dbReference type="PANTHER" id="PTHR42894">
    <property type="entry name" value="N-(5'-PHOSPHORIBOSYL)ANTHRANILATE ISOMERASE"/>
    <property type="match status" value="1"/>
</dbReference>
<dbReference type="PANTHER" id="PTHR42894:SF1">
    <property type="entry name" value="N-(5'-PHOSPHORIBOSYL)ANTHRANILATE ISOMERASE"/>
    <property type="match status" value="1"/>
</dbReference>
<dbReference type="Pfam" id="PF00697">
    <property type="entry name" value="PRAI"/>
    <property type="match status" value="1"/>
</dbReference>
<dbReference type="SUPFAM" id="SSF51366">
    <property type="entry name" value="Ribulose-phoshate binding barrel"/>
    <property type="match status" value="1"/>
</dbReference>
<gene>
    <name evidence="1" type="primary">trpF</name>
    <name type="ordered locus">CJA_1750</name>
</gene>
<protein>
    <recommendedName>
        <fullName evidence="1">N-(5'-phosphoribosyl)anthranilate isomerase</fullName>
        <shortName evidence="1">PRAI</shortName>
        <ecNumber evidence="1">5.3.1.24</ecNumber>
    </recommendedName>
</protein>
<name>TRPF_CELJU</name>